<dbReference type="EMBL" id="AF166114">
    <property type="protein sequence ID" value="AAF43830.1"/>
    <property type="molecule type" value="Genomic_DNA"/>
</dbReference>
<dbReference type="RefSeq" id="NP_038389.1">
    <property type="nucleotide sequence ID" value="NC_002186.1"/>
</dbReference>
<dbReference type="SMR" id="Q9MUS1"/>
<dbReference type="GeneID" id="800940"/>
<dbReference type="GO" id="GO:0009535">
    <property type="term" value="C:chloroplast thylakoid membrane"/>
    <property type="evidence" value="ECO:0007669"/>
    <property type="project" value="UniProtKB-SubCell"/>
</dbReference>
<dbReference type="GO" id="GO:0009539">
    <property type="term" value="C:photosystem II reaction center"/>
    <property type="evidence" value="ECO:0007669"/>
    <property type="project" value="InterPro"/>
</dbReference>
<dbReference type="GO" id="GO:0015979">
    <property type="term" value="P:photosynthesis"/>
    <property type="evidence" value="ECO:0007669"/>
    <property type="project" value="UniProtKB-UniRule"/>
</dbReference>
<dbReference type="HAMAP" id="MF_01316">
    <property type="entry name" value="PSII_PsbI"/>
    <property type="match status" value="1"/>
</dbReference>
<dbReference type="InterPro" id="IPR003686">
    <property type="entry name" value="PSII_PsbI"/>
</dbReference>
<dbReference type="InterPro" id="IPR037271">
    <property type="entry name" value="PSII_PsbI_sf"/>
</dbReference>
<dbReference type="NCBIfam" id="NF002735">
    <property type="entry name" value="PRK02655.1"/>
    <property type="match status" value="1"/>
</dbReference>
<dbReference type="PANTHER" id="PTHR35772">
    <property type="entry name" value="PHOTOSYSTEM II REACTION CENTER PROTEIN I"/>
    <property type="match status" value="1"/>
</dbReference>
<dbReference type="PANTHER" id="PTHR35772:SF1">
    <property type="entry name" value="PHOTOSYSTEM II REACTION CENTER PROTEIN I"/>
    <property type="match status" value="1"/>
</dbReference>
<dbReference type="Pfam" id="PF02532">
    <property type="entry name" value="PsbI"/>
    <property type="match status" value="1"/>
</dbReference>
<dbReference type="SUPFAM" id="SSF161041">
    <property type="entry name" value="Photosystem II reaction center protein I, PsbI"/>
    <property type="match status" value="1"/>
</dbReference>
<accession>Q9MUS1</accession>
<feature type="chain" id="PRO_0000219635" description="Photosystem II reaction center protein I">
    <location>
        <begin position="1"/>
        <end position="38"/>
    </location>
</feature>
<feature type="transmembrane region" description="Helical" evidence="1">
    <location>
        <begin position="6"/>
        <end position="26"/>
    </location>
</feature>
<reference key="1">
    <citation type="journal article" date="2000" name="Nature">
        <title>Ancestral chloroplast genome in Mesostigma viride reveals an early branch of green plant evolution.</title>
        <authorList>
            <person name="Lemieux C."/>
            <person name="Otis C."/>
            <person name="Turmel M."/>
        </authorList>
    </citation>
    <scope>NUCLEOTIDE SEQUENCE [LARGE SCALE GENOMIC DNA]</scope>
    <source>
        <strain>NIES-296 / KY-14 / CCMP 2046</strain>
    </source>
</reference>
<protein>
    <recommendedName>
        <fullName evidence="1">Photosystem II reaction center protein I</fullName>
        <shortName evidence="1">PSII-I</shortName>
    </recommendedName>
    <alternativeName>
        <fullName evidence="1">PSII 4.8 kDa protein</fullName>
    </alternativeName>
</protein>
<proteinExistence type="inferred from homology"/>
<sequence>MLTLKIFVYTVVIFFVSLFIFGFLSSDTGRNPKRKDIE</sequence>
<gene>
    <name evidence="1" type="primary">psbI</name>
</gene>
<keyword id="KW-0150">Chloroplast</keyword>
<keyword id="KW-0472">Membrane</keyword>
<keyword id="KW-0602">Photosynthesis</keyword>
<keyword id="KW-0604">Photosystem II</keyword>
<keyword id="KW-0934">Plastid</keyword>
<keyword id="KW-0674">Reaction center</keyword>
<keyword id="KW-0793">Thylakoid</keyword>
<keyword id="KW-0812">Transmembrane</keyword>
<keyword id="KW-1133">Transmembrane helix</keyword>
<geneLocation type="chloroplast"/>
<evidence type="ECO:0000255" key="1">
    <source>
        <dbReference type="HAMAP-Rule" id="MF_01316"/>
    </source>
</evidence>
<comment type="function">
    <text evidence="1">One of the components of the core complex of photosystem II (PSII), required for its stability and/or assembly. PSII is a light-driven water:plastoquinone oxidoreductase that uses light energy to abstract electrons from H(2)O, generating O(2) and a proton gradient subsequently used for ATP formation. It consists of a core antenna complex that captures photons, and an electron transfer chain that converts photonic excitation into a charge separation.</text>
</comment>
<comment type="subunit">
    <text evidence="1">PSII is composed of 1 copy each of membrane proteins PsbA, PsbB, PsbC, PsbD, PsbE, PsbF, PsbH, PsbI, PsbJ, PsbK, PsbL, PsbM, PsbT, PsbX, PsbY, PsbZ, Psb30/Ycf12, at least 3 peripheral proteins of the oxygen-evolving complex and a large number of cofactors. It forms dimeric complexes.</text>
</comment>
<comment type="subcellular location">
    <subcellularLocation>
        <location evidence="1">Plastid</location>
        <location evidence="1">Chloroplast thylakoid membrane</location>
        <topology evidence="1">Single-pass membrane protein</topology>
    </subcellularLocation>
</comment>
<comment type="similarity">
    <text evidence="1">Belongs to the PsbI family.</text>
</comment>
<organism>
    <name type="scientific">Mesostigma viride</name>
    <name type="common">Green alga</name>
    <dbReference type="NCBI Taxonomy" id="41882"/>
    <lineage>
        <taxon>Eukaryota</taxon>
        <taxon>Viridiplantae</taxon>
        <taxon>Streptophyta</taxon>
        <taxon>Mesostigmatophyceae</taxon>
        <taxon>Mesostigmatales</taxon>
        <taxon>Mesostigmataceae</taxon>
        <taxon>Mesostigma</taxon>
    </lineage>
</organism>
<name>PSBI_MESVI</name>